<name>NCAP_I85A7</name>
<feature type="chain" id="PRO_0000079093" description="Nucleoprotein">
    <location>
        <begin position="1"/>
        <end position="498"/>
    </location>
</feature>
<feature type="region of interest" description="Disordered" evidence="2">
    <location>
        <begin position="1"/>
        <end position="21"/>
    </location>
</feature>
<feature type="short sequence motif" description="Unconventional nuclear localization signal" evidence="1">
    <location>
        <begin position="1"/>
        <end position="18"/>
    </location>
</feature>
<feature type="short sequence motif" description="Bipartite nuclear localization signal" evidence="1">
    <location>
        <begin position="198"/>
        <end position="216"/>
    </location>
</feature>
<gene>
    <name evidence="1" type="primary">NP</name>
</gene>
<dbReference type="EMBL" id="M30766">
    <property type="protein sequence ID" value="AAA43487.1"/>
    <property type="molecule type" value="Genomic_RNA"/>
</dbReference>
<dbReference type="SMR" id="P15676"/>
<dbReference type="GO" id="GO:0019029">
    <property type="term" value="C:helical viral capsid"/>
    <property type="evidence" value="ECO:0007669"/>
    <property type="project" value="UniProtKB-UniRule"/>
</dbReference>
<dbReference type="GO" id="GO:0043657">
    <property type="term" value="C:host cell"/>
    <property type="evidence" value="ECO:0007669"/>
    <property type="project" value="GOC"/>
</dbReference>
<dbReference type="GO" id="GO:0042025">
    <property type="term" value="C:host cell nucleus"/>
    <property type="evidence" value="ECO:0007669"/>
    <property type="project" value="UniProtKB-SubCell"/>
</dbReference>
<dbReference type="GO" id="GO:1990904">
    <property type="term" value="C:ribonucleoprotein complex"/>
    <property type="evidence" value="ECO:0007669"/>
    <property type="project" value="UniProtKB-KW"/>
</dbReference>
<dbReference type="GO" id="GO:0019013">
    <property type="term" value="C:viral nucleocapsid"/>
    <property type="evidence" value="ECO:0007669"/>
    <property type="project" value="UniProtKB-UniRule"/>
</dbReference>
<dbReference type="GO" id="GO:0003723">
    <property type="term" value="F:RNA binding"/>
    <property type="evidence" value="ECO:0007669"/>
    <property type="project" value="UniProtKB-UniRule"/>
</dbReference>
<dbReference type="GO" id="GO:0005198">
    <property type="term" value="F:structural molecule activity"/>
    <property type="evidence" value="ECO:0007669"/>
    <property type="project" value="UniProtKB-UniRule"/>
</dbReference>
<dbReference type="GO" id="GO:0046718">
    <property type="term" value="P:symbiont entry into host cell"/>
    <property type="evidence" value="ECO:0007669"/>
    <property type="project" value="UniProtKB-KW"/>
</dbReference>
<dbReference type="GO" id="GO:0075732">
    <property type="term" value="P:viral penetration into host nucleus"/>
    <property type="evidence" value="ECO:0007669"/>
    <property type="project" value="UniProtKB-UniRule"/>
</dbReference>
<dbReference type="HAMAP" id="MF_04070">
    <property type="entry name" value="INFV_NCAP"/>
    <property type="match status" value="1"/>
</dbReference>
<dbReference type="InterPro" id="IPR002141">
    <property type="entry name" value="Flu_NP"/>
</dbReference>
<dbReference type="Pfam" id="PF00506">
    <property type="entry name" value="Flu_NP"/>
    <property type="match status" value="1"/>
</dbReference>
<dbReference type="SUPFAM" id="SSF161003">
    <property type="entry name" value="flu NP-like"/>
    <property type="match status" value="1"/>
</dbReference>
<proteinExistence type="inferred from homology"/>
<reference key="1">
    <citation type="journal article" date="1990" name="J. Virol.">
        <title>Evolution of the nucleoprotein gene of influenza A virus.</title>
        <authorList>
            <person name="Gorman O.T."/>
            <person name="Bean W.J."/>
            <person name="Kawaoka Y."/>
            <person name="Webster R.G."/>
        </authorList>
    </citation>
    <scope>NUCLEOTIDE SEQUENCE [GENOMIC RNA]</scope>
</reference>
<keyword id="KW-0167">Capsid protein</keyword>
<keyword id="KW-1139">Helical capsid protein</keyword>
<keyword id="KW-1048">Host nucleus</keyword>
<keyword id="KW-0945">Host-virus interaction</keyword>
<keyword id="KW-0687">Ribonucleoprotein</keyword>
<keyword id="KW-0694">RNA-binding</keyword>
<keyword id="KW-0543">Viral nucleoprotein</keyword>
<keyword id="KW-1163">Viral penetration into host nucleus</keyword>
<keyword id="KW-0946">Virion</keyword>
<keyword id="KW-1160">Virus entry into host cell</keyword>
<accession>P15676</accession>
<protein>
    <recommendedName>
        <fullName evidence="1">Nucleoprotein</fullName>
    </recommendedName>
    <alternativeName>
        <fullName evidence="1">Nucleocapsid protein</fullName>
        <shortName evidence="1">Protein N</shortName>
    </alternativeName>
</protein>
<sequence length="498" mass="56197">MASQGTKRSYEQMETGGERQNATEIRASVGRMVGGIGRFYIQMCTELKLSDYEGRLIQNSITIERMVLSAFDERRNKYLEEHPSAGKDPKKTGGPIYRRRDGKWMRELILYDKEEIRRIWRQANNGEDATAGLTHLMIWHSNLNDATYQRTRALVRTGMDPRMCSLMQGSTLPRRSGAAGAAVKGVGTMVLELIRMIKRGINDRNFWRGENGRRTRIAYERMCNILKGKFQTAAQRAMMDQVRESRNPGNAEIEDLIFLARSALILRGSVAHKSCLPACVYGLAVASGYDFEREGYSLVGIDPFRLLQNSQVFSLIRPNENPAHKSQLVWMACHSAAFEDLRVSSFIRGTRVVPRGQLSTRGVQIASNENMETMDSSTLELRSRYWAIRTRSGGNTNQQRASAGQISVQPTFSVQRNLPFERATIMAAFTGNTEGRTSDMRTEIIRMMENASPEDVSFQGRGVFELSDEKATNPIVPSFDMSNEGSYFFGDSAEEYDN</sequence>
<organismHost>
    <name type="scientific">Aves</name>
    <dbReference type="NCBI Taxonomy" id="8782"/>
</organismHost>
<organismHost>
    <name type="scientific">Sus scrofa</name>
    <name type="common">Pig</name>
    <dbReference type="NCBI Taxonomy" id="9823"/>
</organismHost>
<comment type="function">
    <text evidence="1">Encapsidates the negative strand viral RNA, protecting it from nucleases. The encapsidated genomic RNA is termed the ribonucleoprotein (RNP) and serves as template for transcription and replication. The RNP needs to be localized in the host nucleus to start an infectious cycle, but is too large to diffuse through the nuclear pore complex. NP comprises at least 2 nuclear localization signals that are responsible for the active RNP import into the nucleus through cellular importin alpha/beta pathway. Later in the infection, nclear export of RNPs are mediated through viral proteins NEP interacting with M1 which binds nucleoproteins. It is possible that nucleoprotein binds directly host exportin-1/XPO1 and plays an active role in RNPs nuclear export. M1 interaction with RNP seems to hide nucleoprotein's nuclear localization signals. Soon after a virion infects a new cell, M1 dissociates from the RNP under acidification of the virion driven by M2 protein. Dissociation of M1 from RNP unmasks nucleoprotein's nuclear localization signals, targeting the RNP to the nucleus.</text>
</comment>
<comment type="subunit">
    <text evidence="1">Homomultimerizes to form the nucleocapsid. May bind host exportin-1/XPO1. Binds to viral genomic RNA. Protein-RNA contacts are mediated by a combination of electrostatic interactions between positively charged residues and the phosphate backbone and planar interactions between aromatic side chains and bases.</text>
</comment>
<comment type="subcellular location">
    <subcellularLocation>
        <location evidence="1">Virion</location>
    </subcellularLocation>
    <subcellularLocation>
        <location evidence="1">Host nucleus</location>
    </subcellularLocation>
</comment>
<comment type="PTM">
    <text evidence="1">Late in virus-infected cells, may be cleaved from a 56-kDa protein to a 53-kDa protein by a cellular caspase. This cleavage might be a marker for the onset of apoptosis in infected cells or have a specific function in virus host interaction.</text>
</comment>
<comment type="similarity">
    <text evidence="1">Belongs to the influenza viruses nucleoprotein family.</text>
</comment>
<evidence type="ECO:0000255" key="1">
    <source>
        <dbReference type="HAMAP-Rule" id="MF_04070"/>
    </source>
</evidence>
<evidence type="ECO:0000256" key="2">
    <source>
        <dbReference type="SAM" id="MobiDB-lite"/>
    </source>
</evidence>
<organism>
    <name type="scientific">Influenza A virus (strain A/Ruddy Turnstone/New Jersey/47/1985 H4N6)</name>
    <dbReference type="NCBI Taxonomy" id="380343"/>
    <lineage>
        <taxon>Viruses</taxon>
        <taxon>Riboviria</taxon>
        <taxon>Orthornavirae</taxon>
        <taxon>Negarnaviricota</taxon>
        <taxon>Polyploviricotina</taxon>
        <taxon>Insthoviricetes</taxon>
        <taxon>Articulavirales</taxon>
        <taxon>Orthomyxoviridae</taxon>
        <taxon>Alphainfluenzavirus</taxon>
        <taxon>Alphainfluenzavirus influenzae</taxon>
        <taxon>Influenza A virus</taxon>
    </lineage>
</organism>